<accession>A0A3N7G677</accession>
<organism>
    <name type="scientific">Populus trichocarpa</name>
    <name type="common">Western balsam poplar</name>
    <name type="synonym">Populus balsamifera subsp. trichocarpa</name>
    <dbReference type="NCBI Taxonomy" id="3694"/>
    <lineage>
        <taxon>Eukaryota</taxon>
        <taxon>Viridiplantae</taxon>
        <taxon>Streptophyta</taxon>
        <taxon>Embryophyta</taxon>
        <taxon>Tracheophyta</taxon>
        <taxon>Spermatophyta</taxon>
        <taxon>Magnoliopsida</taxon>
        <taxon>eudicotyledons</taxon>
        <taxon>Gunneridae</taxon>
        <taxon>Pentapetalae</taxon>
        <taxon>rosids</taxon>
        <taxon>fabids</taxon>
        <taxon>Malpighiales</taxon>
        <taxon>Salicaceae</taxon>
        <taxon>Saliceae</taxon>
        <taxon>Populus</taxon>
    </lineage>
</organism>
<sequence length="1289" mass="140460">MDTEFANANHPLHFLHRLLPAVGPGLLIAIGYVDPGKWAATVEGGARFGFDLVLPMLLFNFVAILCQYLSARIGVITRKDLAQICNDEYDKWTCMFLGVQAALSVIALDLTMILGIAHGLNLLFGMDLSTCVSLAAAEAILFPFFATLMERCKASFLCTCIAGFILLLYFFGVLISQPGIPLSINGTRTKLSEESVFALMSLLGASIMPHNFFLHSAIVLQHQGPPNISRDALCLNHFFAILCIFSGIYLVNFVLMNSAANVFHSTGLVLLTFPDAMSLMEQVFRSPVAPFGFSLILFFANQITAFSWNLGGQVVLHNFLRLDIPNWLQRATFRIIAVVPALYCVWTSGVEGIYQLLILTQVMVALLLPSSVIPLFHIASSRQVMGVYKISPFLEFVALISFMGMLGIKIIFVVEMVFGDSDWVGTLRWSTVSGSSTSYIVLLITACSSFCLMLWLAATPLKSATRLDAQVCNWDVQNAVSEPSTLIEEEFLTENICTGEELIERQEQLPEPGKSFESYSNITVANADPDLPETIMESDQELHLTTIKEKHSEVAFSSPQTFYEETSPTTESASLSASVNLVPDAELLVAKKAKIESMDPVEKTLDIEGELHTEKEDDEGDNWEPEDSSKGVPGSTLSLTSDGPGSFRSLSGKSDAGGNGAGSLSRLAGLGRAARRQLAAVLDEFWGQLYDFHGQITQEAKTKKLDALGVDLKLASSQLKVDTAGKESSGYFSLVGGRASDSLINSSLCDSPKQLRVQSNIDSSYGVQRGPSSLWSNHMQLLDAYVQGPSQSIADSSERRYSGVRTPPSSDGWDNQPATVHGYQIASIANRIAKDRGFSSLNGQMESPAPISPSLGPRNYRDPLTVSMGKNLQNGLSSSQASGFQNLAVTRNSPLQSERPYHDVYSGSADDTGMSANTKKYHSLPDISGLAGPYRDLYMSEKNAQWDKSAGFGSSVGRSAYEQSYYSNTGSGAGGPLSFNGLSKGHGDAFSLHMTPDPGSLWSKQPFEQFGVADKIRAVGSGLGNRSNSINREVTSPVDSEAQLLRSFRHCIVKLLKLEGSDWLFRQNDGADEDLIDCVAARERYLYEAETREMNHVDHMGGSTYLYSDRKSGSALRNDDASITNIMVSSVPHCGEGCVWRSDLIISFGVWCIHRILDLSLMESRPELWGKYTYVLNRLQGIIELAFSKPRTPMSPCFCLQIPASHQHRSSPPASNGMLPPASKPGRGKCTTAATLLDLIKDVEIAISCRKGRSGTAAGDVAFPKGKENLASVLKRYKRRLSNKLIGSK</sequence>
<protein>
    <recommendedName>
        <fullName evidence="5">Ethylene-insensitive protein 2.1</fullName>
        <shortName evidence="5">PotriEIN2.1</shortName>
    </recommendedName>
    <component>
        <recommendedName>
            <fullName evidence="1">EIN2.1-CEND</fullName>
        </recommendedName>
    </component>
</protein>
<keyword id="KW-0963">Cytoplasm</keyword>
<keyword id="KW-0256">Endoplasmic reticulum</keyword>
<keyword id="KW-0325">Glycoprotein</keyword>
<keyword id="KW-0472">Membrane</keyword>
<keyword id="KW-0539">Nucleus</keyword>
<keyword id="KW-0597">Phosphoprotein</keyword>
<keyword id="KW-1185">Reference proteome</keyword>
<keyword id="KW-0812">Transmembrane</keyword>
<keyword id="KW-1133">Transmembrane helix</keyword>
<feature type="chain" id="PRO_0000457944" description="Ethylene-insensitive protein 2.1">
    <location>
        <begin position="1"/>
        <end position="1289"/>
    </location>
</feature>
<feature type="chain" id="PRO_0000457945" description="EIN2.1-CEND">
    <location>
        <begin position="647"/>
        <end position="1289"/>
    </location>
</feature>
<feature type="transmembrane region" description="Helical" evidence="2">
    <location>
        <begin position="18"/>
        <end position="38"/>
    </location>
</feature>
<feature type="transmembrane region" description="Helical" evidence="2">
    <location>
        <begin position="48"/>
        <end position="68"/>
    </location>
</feature>
<feature type="transmembrane region" description="Helical" evidence="2">
    <location>
        <begin position="96"/>
        <end position="116"/>
    </location>
</feature>
<feature type="transmembrane region" description="Helical" evidence="2">
    <location>
        <begin position="128"/>
        <end position="148"/>
    </location>
</feature>
<feature type="transmembrane region" description="Helical" evidence="2">
    <location>
        <begin position="155"/>
        <end position="175"/>
    </location>
</feature>
<feature type="transmembrane region" description="Helical" evidence="2">
    <location>
        <begin position="199"/>
        <end position="219"/>
    </location>
</feature>
<feature type="transmembrane region" description="Helical" evidence="2">
    <location>
        <begin position="235"/>
        <end position="255"/>
    </location>
</feature>
<feature type="transmembrane region" description="Helical" evidence="2">
    <location>
        <begin position="260"/>
        <end position="280"/>
    </location>
</feature>
<feature type="transmembrane region" description="Helical" evidence="2">
    <location>
        <begin position="288"/>
        <end position="308"/>
    </location>
</feature>
<feature type="transmembrane region" description="Helical" evidence="2">
    <location>
        <begin position="335"/>
        <end position="355"/>
    </location>
</feature>
<feature type="transmembrane region" description="Helical" evidence="2">
    <location>
        <begin position="356"/>
        <end position="376"/>
    </location>
</feature>
<feature type="transmembrane region" description="Helical" evidence="2">
    <location>
        <begin position="393"/>
        <end position="413"/>
    </location>
</feature>
<feature type="transmembrane region" description="Helical" evidence="2">
    <location>
        <begin position="439"/>
        <end position="459"/>
    </location>
</feature>
<feature type="region of interest" description="Disordered" evidence="4">
    <location>
        <begin position="611"/>
        <end position="659"/>
    </location>
</feature>
<feature type="region of interest" description="Disordered" evidence="4">
    <location>
        <begin position="792"/>
        <end position="816"/>
    </location>
</feature>
<feature type="region of interest" description="Disordered" evidence="4">
    <location>
        <begin position="1208"/>
        <end position="1227"/>
    </location>
</feature>
<feature type="short sequence motif" description="Nuclear localization signal" evidence="2">
    <location>
        <begin position="1274"/>
        <end position="1281"/>
    </location>
</feature>
<feature type="compositionally biased region" description="Acidic residues" evidence="4">
    <location>
        <begin position="616"/>
        <end position="626"/>
    </location>
</feature>
<feature type="compositionally biased region" description="Polar residues" evidence="4">
    <location>
        <begin position="635"/>
        <end position="652"/>
    </location>
</feature>
<feature type="compositionally biased region" description="Polar residues" evidence="4">
    <location>
        <begin position="807"/>
        <end position="816"/>
    </location>
</feature>
<feature type="modified residue" description="Phosphoserine" evidence="1">
    <location>
        <position position="646"/>
    </location>
</feature>
<feature type="modified residue" description="Phosphoserine" evidence="1">
    <location>
        <position position="663"/>
    </location>
</feature>
<feature type="modified residue" description="Phosphothreonine" evidence="1">
    <location>
        <position position="819"/>
    </location>
</feature>
<feature type="modified residue" description="Phosphoserine" evidence="1">
    <location>
        <position position="923"/>
    </location>
</feature>
<feature type="glycosylation site" description="N-linked (GlcNAc...) asparagine" evidence="3">
    <location>
        <position position="185"/>
    </location>
</feature>
<feature type="glycosylation site" description="N-linked (GlcNAc...) asparagine" evidence="3">
    <location>
        <position position="227"/>
    </location>
</feature>
<feature type="glycosylation site" description="N-linked (GlcNAc...) asparagine" evidence="3">
    <location>
        <position position="521"/>
    </location>
</feature>
<feature type="glycosylation site" description="N-linked (GlcNAc...) asparagine" evidence="3">
    <location>
        <position position="745"/>
    </location>
</feature>
<feature type="glycosylation site" description="N-linked (GlcNAc...) asparagine" evidence="3">
    <location>
        <position position="1025"/>
    </location>
</feature>
<gene>
    <name evidence="5" type="primary">EIN2.1</name>
    <name evidence="6" type="ordered locus">Potri.016G090800</name>
</gene>
<reference key="1">
    <citation type="journal article" date="2006" name="Science">
        <title>The genome of black cottonwood, Populus trichocarpa (Torr. &amp; Gray).</title>
        <authorList>
            <person name="Tuskan G.A."/>
            <person name="Difazio S."/>
            <person name="Jansson S."/>
            <person name="Bohlmann J."/>
            <person name="Grigoriev I."/>
            <person name="Hellsten U."/>
            <person name="Putnam N."/>
            <person name="Ralph S."/>
            <person name="Rombauts S."/>
            <person name="Salamov A."/>
            <person name="Schein J."/>
            <person name="Sterck L."/>
            <person name="Aerts A."/>
            <person name="Bhalerao R.R."/>
            <person name="Bhalerao R.P."/>
            <person name="Blaudez D."/>
            <person name="Boerjan W."/>
            <person name="Brun A."/>
            <person name="Brunner A."/>
            <person name="Busov V."/>
            <person name="Campbell M."/>
            <person name="Carlson J."/>
            <person name="Chalot M."/>
            <person name="Chapman J."/>
            <person name="Chen G.-L."/>
            <person name="Cooper D."/>
            <person name="Coutinho P.M."/>
            <person name="Couturier J."/>
            <person name="Covert S."/>
            <person name="Cronk Q."/>
            <person name="Cunningham R."/>
            <person name="Davis J."/>
            <person name="Degroeve S."/>
            <person name="Dejardin A."/>
            <person name="dePamphilis C.W."/>
            <person name="Detter J."/>
            <person name="Dirks B."/>
            <person name="Dubchak I."/>
            <person name="Duplessis S."/>
            <person name="Ehlting J."/>
            <person name="Ellis B."/>
            <person name="Gendler K."/>
            <person name="Goodstein D."/>
            <person name="Gribskov M."/>
            <person name="Grimwood J."/>
            <person name="Groover A."/>
            <person name="Gunter L."/>
            <person name="Hamberger B."/>
            <person name="Heinze B."/>
            <person name="Helariutta Y."/>
            <person name="Henrissat B."/>
            <person name="Holligan D."/>
            <person name="Holt R."/>
            <person name="Huang W."/>
            <person name="Islam-Faridi N."/>
            <person name="Jones S."/>
            <person name="Jones-Rhoades M."/>
            <person name="Jorgensen R."/>
            <person name="Joshi C."/>
            <person name="Kangasjaervi J."/>
            <person name="Karlsson J."/>
            <person name="Kelleher C."/>
            <person name="Kirkpatrick R."/>
            <person name="Kirst M."/>
            <person name="Kohler A."/>
            <person name="Kalluri U."/>
            <person name="Larimer F."/>
            <person name="Leebens-Mack J."/>
            <person name="Leple J.-C."/>
            <person name="Locascio P."/>
            <person name="Lou Y."/>
            <person name="Lucas S."/>
            <person name="Martin F."/>
            <person name="Montanini B."/>
            <person name="Napoli C."/>
            <person name="Nelson D.R."/>
            <person name="Nelson C."/>
            <person name="Nieminen K."/>
            <person name="Nilsson O."/>
            <person name="Pereda V."/>
            <person name="Peter G."/>
            <person name="Philippe R."/>
            <person name="Pilate G."/>
            <person name="Poliakov A."/>
            <person name="Razumovskaya J."/>
            <person name="Richardson P."/>
            <person name="Rinaldi C."/>
            <person name="Ritland K."/>
            <person name="Rouze P."/>
            <person name="Ryaboy D."/>
            <person name="Schmutz J."/>
            <person name="Schrader J."/>
            <person name="Segerman B."/>
            <person name="Shin H."/>
            <person name="Siddiqui A."/>
            <person name="Sterky F."/>
            <person name="Terry A."/>
            <person name="Tsai C.-J."/>
            <person name="Uberbacher E."/>
            <person name="Unneberg P."/>
            <person name="Vahala J."/>
            <person name="Wall K."/>
            <person name="Wessler S."/>
            <person name="Yang G."/>
            <person name="Yin T."/>
            <person name="Douglas C."/>
            <person name="Marra M."/>
            <person name="Sandberg G."/>
            <person name="Van de Peer Y."/>
            <person name="Rokhsar D.S."/>
        </authorList>
    </citation>
    <scope>NUCLEOTIDE SEQUENCE [LARGE SCALE GENOMIC DNA]</scope>
    <source>
        <strain>cv. Nisqually</strain>
    </source>
</reference>
<reference key="2">
    <citation type="journal article" date="2022" name="Mol. Biol. Evol.">
        <title>Duplication of NRAMP3 gene in poplars generated two homologous transporters with distinct functions.</title>
        <authorList>
            <person name="Pottier M."/>
            <person name="Le Thi V.A."/>
            <person name="Primard-Brisset C."/>
            <person name="Marion J."/>
            <person name="Bianchi M.W."/>
            <person name="Victor C."/>
            <person name="Dejardin A."/>
            <person name="Pilate G."/>
            <person name="Thomine S."/>
        </authorList>
    </citation>
    <scope>GENE FAMILY</scope>
    <source>
        <strain>cv. Nisqually</strain>
    </source>
</reference>
<proteinExistence type="inferred from homology"/>
<evidence type="ECO:0000250" key="1">
    <source>
        <dbReference type="UniProtKB" id="Q9S814"/>
    </source>
</evidence>
<evidence type="ECO:0000255" key="2"/>
<evidence type="ECO:0000255" key="3">
    <source>
        <dbReference type="PROSITE-ProRule" id="PRU00498"/>
    </source>
</evidence>
<evidence type="ECO:0000256" key="4">
    <source>
        <dbReference type="SAM" id="MobiDB-lite"/>
    </source>
</evidence>
<evidence type="ECO:0000303" key="5">
    <source>
    </source>
</evidence>
<evidence type="ECO:0000305" key="6"/>
<comment type="function">
    <text evidence="1">Central factor in signaling pathways regulated by ethylene (ET) and involved in various processes including development, plant defense, senescence, nucleotide sugar flux, and tropisms.</text>
</comment>
<comment type="function">
    <molecule>EIN2.1-CEND</molecule>
    <text evidence="1">Trafficking signal inducing ethylene response (By similarity). The nuclear localization is both necessary and sufficient to activate EIN3-mediated transcription and ethylene responses (By similarity).</text>
</comment>
<comment type="subcellular location">
    <molecule>Ethylene-insensitive protein 2.1</molecule>
    <subcellularLocation>
        <location evidence="1">Endoplasmic reticulum membrane</location>
        <topology evidence="2">Multi-pass membrane protein</topology>
    </subcellularLocation>
</comment>
<comment type="subcellular location">
    <molecule>EIN2.1-CEND</molecule>
    <subcellularLocation>
        <location evidence="1">Nucleus</location>
    </subcellularLocation>
    <subcellularLocation>
        <location evidence="1">Cytoplasm</location>
    </subcellularLocation>
    <subcellularLocation>
        <location evidence="1">Endoplasmic reticulum membrane</location>
    </subcellularLocation>
    <text evidence="1">Perception of ethylene or methyl jasmonate leads to proteolytic cleavage allowing the C-terminal domain to localize to the nucleus while the N-terminus remains at the endoplasmic reticulum membrane.</text>
</comment>
<comment type="domain">
    <text evidence="1">The N-terminal (1-562) region seems to be regulated by upstream components of the ET signal transduction pathway, and may in turn regulate the C-terminal region (By similarity). The C-terminal (454-1289) region regulates downstream events of ET and jasmonate signaling pathways, and can confer constitutive responses to ET (By similarity). The nuclear localization signal (1274-1281) is required for interaction with ETR1 (By similarity).</text>
</comment>
<comment type="similarity">
    <text evidence="6">Belongs to the NRAMP (TC 2.A.55) family.</text>
</comment>
<dbReference type="EMBL" id="CM009305">
    <property type="protein sequence ID" value="RQP01521.1"/>
    <property type="molecule type" value="Genomic_DNA"/>
</dbReference>
<dbReference type="EMBL" id="CM009305">
    <property type="protein sequence ID" value="RQP01522.1"/>
    <property type="molecule type" value="Genomic_DNA"/>
</dbReference>
<dbReference type="SMR" id="A0A3N7G677"/>
<dbReference type="FunCoup" id="A0A3N7G677">
    <property type="interactions" value="2925"/>
</dbReference>
<dbReference type="STRING" id="3694.A0A3N7G677"/>
<dbReference type="EnsemblPlants" id="Potri.016G090800.4.v4.1">
    <property type="protein sequence ID" value="Potri.016G090800.4.v4.1"/>
    <property type="gene ID" value="Potri.016G090800.v4.1"/>
</dbReference>
<dbReference type="EnsemblPlants" id="Potri.016G090800.5.v4.1">
    <property type="protein sequence ID" value="Potri.016G090800.5.v4.1"/>
    <property type="gene ID" value="Potri.016G090800.v4.1"/>
</dbReference>
<dbReference type="EnsemblPlants" id="Potri.016G090800.7.v4.1">
    <property type="protein sequence ID" value="Potri.016G090800.7.v4.1"/>
    <property type="gene ID" value="Potri.016G090800.v4.1"/>
</dbReference>
<dbReference type="EnsemblPlants" id="Potri.016G090800.8.v4.1">
    <property type="protein sequence ID" value="Potri.016G090800.8.v4.1"/>
    <property type="gene ID" value="Potri.016G090800.v4.1"/>
</dbReference>
<dbReference type="Gramene" id="Potri.016G090800.4.v4.1">
    <property type="protein sequence ID" value="Potri.016G090800.4.v4.1"/>
    <property type="gene ID" value="Potri.016G090800.v4.1"/>
</dbReference>
<dbReference type="Gramene" id="Potri.016G090800.5.v4.1">
    <property type="protein sequence ID" value="Potri.016G090800.5.v4.1"/>
    <property type="gene ID" value="Potri.016G090800.v4.1"/>
</dbReference>
<dbReference type="Gramene" id="Potri.016G090800.7.v4.1">
    <property type="protein sequence ID" value="Potri.016G090800.7.v4.1"/>
    <property type="gene ID" value="Potri.016G090800.v4.1"/>
</dbReference>
<dbReference type="Gramene" id="Potri.016G090800.8.v4.1">
    <property type="protein sequence ID" value="Potri.016G090800.8.v4.1"/>
    <property type="gene ID" value="Potri.016G090800.v4.1"/>
</dbReference>
<dbReference type="InParanoid" id="A0A3N7G677"/>
<dbReference type="OMA" id="ADIQYMR"/>
<dbReference type="OrthoDB" id="409173at2759"/>
<dbReference type="Proteomes" id="UP000006729">
    <property type="component" value="Chromosome 16"/>
</dbReference>
<dbReference type="GO" id="GO:0005789">
    <property type="term" value="C:endoplasmic reticulum membrane"/>
    <property type="evidence" value="ECO:0007669"/>
    <property type="project" value="UniProtKB-SubCell"/>
</dbReference>
<dbReference type="GO" id="GO:0005634">
    <property type="term" value="C:nucleus"/>
    <property type="evidence" value="ECO:0007669"/>
    <property type="project" value="UniProtKB-SubCell"/>
</dbReference>
<dbReference type="GO" id="GO:0005886">
    <property type="term" value="C:plasma membrane"/>
    <property type="evidence" value="ECO:0000318"/>
    <property type="project" value="GO_Central"/>
</dbReference>
<dbReference type="GO" id="GO:0015086">
    <property type="term" value="F:cadmium ion transmembrane transporter activity"/>
    <property type="evidence" value="ECO:0000318"/>
    <property type="project" value="GO_Central"/>
</dbReference>
<dbReference type="GO" id="GO:0005384">
    <property type="term" value="F:manganese ion transmembrane transporter activity"/>
    <property type="evidence" value="ECO:0000318"/>
    <property type="project" value="GO_Central"/>
</dbReference>
<dbReference type="GO" id="GO:0009873">
    <property type="term" value="P:ethylene-activated signaling pathway"/>
    <property type="evidence" value="ECO:0007669"/>
    <property type="project" value="InterPro"/>
</dbReference>
<dbReference type="GO" id="GO:0034755">
    <property type="term" value="P:iron ion transmembrane transport"/>
    <property type="evidence" value="ECO:0000318"/>
    <property type="project" value="GO_Central"/>
</dbReference>
<dbReference type="GO" id="GO:0006828">
    <property type="term" value="P:manganese ion transport"/>
    <property type="evidence" value="ECO:0000318"/>
    <property type="project" value="GO_Central"/>
</dbReference>
<dbReference type="InterPro" id="IPR017187">
    <property type="entry name" value="EIN2"/>
</dbReference>
<dbReference type="InterPro" id="IPR001046">
    <property type="entry name" value="NRAMP_fam"/>
</dbReference>
<dbReference type="PANTHER" id="PTHR11706:SF75">
    <property type="entry name" value="ETHYLENE-INSENSITIVE PROTEIN 2"/>
    <property type="match status" value="1"/>
</dbReference>
<dbReference type="PANTHER" id="PTHR11706">
    <property type="entry name" value="SOLUTE CARRIER PROTEIN FAMILY 11 MEMBER"/>
    <property type="match status" value="1"/>
</dbReference>
<dbReference type="Pfam" id="PF01566">
    <property type="entry name" value="Nramp"/>
    <property type="match status" value="1"/>
</dbReference>
<dbReference type="PIRSF" id="PIRSF037378">
    <property type="entry name" value="EIN2"/>
    <property type="match status" value="1"/>
</dbReference>
<dbReference type="PRINTS" id="PR00447">
    <property type="entry name" value="NATRESASSCMP"/>
</dbReference>
<name>EIN21_POPTR</name>